<dbReference type="EMBL" id="AF162444">
    <property type="protein sequence ID" value="AAD48972.1"/>
    <property type="status" value="ALT_INIT"/>
    <property type="molecule type" value="Genomic_DNA"/>
</dbReference>
<dbReference type="EMBL" id="AL161502">
    <property type="protein sequence ID" value="CAB81042.1"/>
    <property type="status" value="ALT_INIT"/>
    <property type="molecule type" value="Genomic_DNA"/>
</dbReference>
<dbReference type="EMBL" id="CP002687">
    <property type="protein sequence ID" value="AEE82456.1"/>
    <property type="molecule type" value="Genomic_DNA"/>
</dbReference>
<dbReference type="EMBL" id="CP002687">
    <property type="protein sequence ID" value="AEE82457.1"/>
    <property type="molecule type" value="Genomic_DNA"/>
</dbReference>
<dbReference type="EMBL" id="CP002687">
    <property type="protein sequence ID" value="ANM66421.1"/>
    <property type="molecule type" value="Genomic_DNA"/>
</dbReference>
<dbReference type="EMBL" id="BT015071">
    <property type="protein sequence ID" value="AAT71943.1"/>
    <property type="molecule type" value="mRNA"/>
</dbReference>
<dbReference type="EMBL" id="BT015727">
    <property type="protein sequence ID" value="AAU45225.1"/>
    <property type="molecule type" value="mRNA"/>
</dbReference>
<dbReference type="EMBL" id="AK229295">
    <property type="protein sequence ID" value="BAF01158.1"/>
    <property type="molecule type" value="mRNA"/>
</dbReference>
<dbReference type="PIR" id="H85062">
    <property type="entry name" value="H85062"/>
</dbReference>
<dbReference type="RefSeq" id="NP_001328317.1">
    <property type="nucleotide sequence ID" value="NM_001340525.1"/>
</dbReference>
<dbReference type="RefSeq" id="NP_567281.2">
    <property type="nucleotide sequence ID" value="NM_116739.4"/>
</dbReference>
<dbReference type="RefSeq" id="NP_974513.1">
    <property type="nucleotide sequence ID" value="NM_202784.3"/>
</dbReference>
<dbReference type="SMR" id="Q9S9T7"/>
<dbReference type="BioGRID" id="11153">
    <property type="interactions" value="7"/>
</dbReference>
<dbReference type="FunCoup" id="Q9S9T7">
    <property type="interactions" value="4215"/>
</dbReference>
<dbReference type="IntAct" id="Q9S9T7">
    <property type="interactions" value="3"/>
</dbReference>
<dbReference type="STRING" id="3702.Q9S9T7"/>
<dbReference type="TCDB" id="3.A.31.1.2">
    <property type="family name" value="the endosomal sorting complexes required for transport iii (escrt-iii) family"/>
</dbReference>
<dbReference type="PaxDb" id="3702-AT4G05000.1"/>
<dbReference type="ProteomicsDB" id="242732"/>
<dbReference type="DNASU" id="825842"/>
<dbReference type="EnsemblPlants" id="AT4G05000.1">
    <property type="protein sequence ID" value="AT4G05000.1"/>
    <property type="gene ID" value="AT4G05000"/>
</dbReference>
<dbReference type="EnsemblPlants" id="AT4G05000.2">
    <property type="protein sequence ID" value="AT4G05000.2"/>
    <property type="gene ID" value="AT4G05000"/>
</dbReference>
<dbReference type="EnsemblPlants" id="AT4G05000.3">
    <property type="protein sequence ID" value="AT4G05000.3"/>
    <property type="gene ID" value="AT4G05000"/>
</dbReference>
<dbReference type="GeneID" id="825842"/>
<dbReference type="Gramene" id="AT4G05000.1">
    <property type="protein sequence ID" value="AT4G05000.1"/>
    <property type="gene ID" value="AT4G05000"/>
</dbReference>
<dbReference type="Gramene" id="AT4G05000.2">
    <property type="protein sequence ID" value="AT4G05000.2"/>
    <property type="gene ID" value="AT4G05000"/>
</dbReference>
<dbReference type="Gramene" id="AT4G05000.3">
    <property type="protein sequence ID" value="AT4G05000.3"/>
    <property type="gene ID" value="AT4G05000"/>
</dbReference>
<dbReference type="KEGG" id="ath:AT4G05000"/>
<dbReference type="Araport" id="AT4G05000"/>
<dbReference type="TAIR" id="AT4G05000">
    <property type="gene designation" value="VPS28-2"/>
</dbReference>
<dbReference type="eggNOG" id="KOG3284">
    <property type="taxonomic scope" value="Eukaryota"/>
</dbReference>
<dbReference type="HOGENOM" id="CLU_076417_1_0_1"/>
<dbReference type="InParanoid" id="Q9S9T7"/>
<dbReference type="OMA" id="CDEFPTV"/>
<dbReference type="PhylomeDB" id="Q9S9T7"/>
<dbReference type="PRO" id="PR:Q9S9T7"/>
<dbReference type="Proteomes" id="UP000006548">
    <property type="component" value="Chromosome 4"/>
</dbReference>
<dbReference type="ExpressionAtlas" id="Q9S9T7">
    <property type="expression patterns" value="baseline and differential"/>
</dbReference>
<dbReference type="GO" id="GO:0005829">
    <property type="term" value="C:cytosol"/>
    <property type="evidence" value="ECO:0007005"/>
    <property type="project" value="TAIR"/>
</dbReference>
<dbReference type="GO" id="GO:0000813">
    <property type="term" value="C:ESCRT I complex"/>
    <property type="evidence" value="ECO:0000250"/>
    <property type="project" value="TAIR"/>
</dbReference>
<dbReference type="GO" id="GO:0032509">
    <property type="term" value="P:endosome transport via multivesicular body sorting pathway"/>
    <property type="evidence" value="ECO:0007669"/>
    <property type="project" value="InterPro"/>
</dbReference>
<dbReference type="GO" id="GO:0015031">
    <property type="term" value="P:protein transport"/>
    <property type="evidence" value="ECO:0007669"/>
    <property type="project" value="UniProtKB-KW"/>
</dbReference>
<dbReference type="FunFam" id="1.20.120.1130:FF:000001">
    <property type="entry name" value="Vacuolar protein sorting-associated protein 28 homolog"/>
    <property type="match status" value="1"/>
</dbReference>
<dbReference type="FunFam" id="1.20.1440.200:FF:000002">
    <property type="entry name" value="Vacuolar protein sorting-associated protein 28 homolog"/>
    <property type="match status" value="1"/>
</dbReference>
<dbReference type="Gene3D" id="1.20.120.1130">
    <property type="match status" value="1"/>
</dbReference>
<dbReference type="Gene3D" id="1.20.1440.200">
    <property type="match status" value="1"/>
</dbReference>
<dbReference type="InterPro" id="IPR037202">
    <property type="entry name" value="ESCRT_assembly_dom"/>
</dbReference>
<dbReference type="InterPro" id="IPR007143">
    <property type="entry name" value="Vps28"/>
</dbReference>
<dbReference type="InterPro" id="IPR017899">
    <property type="entry name" value="VPS28_C"/>
</dbReference>
<dbReference type="InterPro" id="IPR037206">
    <property type="entry name" value="VPS28_C_sf"/>
</dbReference>
<dbReference type="InterPro" id="IPR017898">
    <property type="entry name" value="VPS28_N"/>
</dbReference>
<dbReference type="InterPro" id="IPR038358">
    <property type="entry name" value="VPS28_N_sf"/>
</dbReference>
<dbReference type="PANTHER" id="PTHR12937">
    <property type="entry name" value="VACUOLAR PROTEIN SORTING 28, ISOFORM 2 VPS28"/>
    <property type="match status" value="1"/>
</dbReference>
<dbReference type="PANTHER" id="PTHR12937:SF0">
    <property type="entry name" value="VACUOLAR PROTEIN SORTING-ASSOCIATED PROTEIN 28 HOMOLOG"/>
    <property type="match status" value="1"/>
</dbReference>
<dbReference type="Pfam" id="PF03997">
    <property type="entry name" value="VPS28"/>
    <property type="match status" value="1"/>
</dbReference>
<dbReference type="PIRSF" id="PIRSF017535">
    <property type="entry name" value="VPS28"/>
    <property type="match status" value="1"/>
</dbReference>
<dbReference type="SUPFAM" id="SSF140111">
    <property type="entry name" value="Endosomal sorting complex assembly domain"/>
    <property type="match status" value="1"/>
</dbReference>
<dbReference type="SUPFAM" id="SSF140427">
    <property type="entry name" value="VPS28 C-terminal domain-like"/>
    <property type="match status" value="1"/>
</dbReference>
<dbReference type="PROSITE" id="PS51310">
    <property type="entry name" value="VPS28_C"/>
    <property type="match status" value="1"/>
</dbReference>
<dbReference type="PROSITE" id="PS51313">
    <property type="entry name" value="VPS28_N"/>
    <property type="match status" value="1"/>
</dbReference>
<gene>
    <name type="primary">VPS28-2</name>
    <name type="ordered locus">At4g05000</name>
    <name type="ORF">T32N4.6</name>
</gene>
<protein>
    <recommendedName>
        <fullName>Vacuolar protein sorting-associated protein 28 homolog 2</fullName>
    </recommendedName>
</protein>
<organism>
    <name type="scientific">Arabidopsis thaliana</name>
    <name type="common">Mouse-ear cress</name>
    <dbReference type="NCBI Taxonomy" id="3702"/>
    <lineage>
        <taxon>Eukaryota</taxon>
        <taxon>Viridiplantae</taxon>
        <taxon>Streptophyta</taxon>
        <taxon>Embryophyta</taxon>
        <taxon>Tracheophyta</taxon>
        <taxon>Spermatophyta</taxon>
        <taxon>Magnoliopsida</taxon>
        <taxon>eudicotyledons</taxon>
        <taxon>Gunneridae</taxon>
        <taxon>Pentapetalae</taxon>
        <taxon>rosids</taxon>
        <taxon>malvids</taxon>
        <taxon>Brassicales</taxon>
        <taxon>Brassicaceae</taxon>
        <taxon>Camelineae</taxon>
        <taxon>Arabidopsis</taxon>
    </lineage>
</organism>
<keyword id="KW-0967">Endosome</keyword>
<keyword id="KW-0653">Protein transport</keyword>
<keyword id="KW-1185">Reference proteome</keyword>
<keyword id="KW-0813">Transport</keyword>
<comment type="function">
    <text evidence="1">Component of the ESCRT-I complex (endosomal sorting complex required for transport I), a regulator of vesicular trafficking process. Required for the sorting of endocytic ubiquitinated cargos into multivesicular bodies (MVBs). Mediates the association to the ESCRT-0 complex (By similarity).</text>
</comment>
<comment type="subunit">
    <text evidence="4">Component of the endosomal sorting required for transport complex I (ESCRT-I), composed of ELC, VPS28 and VPS37. Interacts with ELC.</text>
</comment>
<comment type="interaction">
    <interactant intactId="EBI-3865335">
        <id>Q9S9T7</id>
    </interactant>
    <interactant intactId="EBI-3865264">
        <id>Q9SCP9</id>
        <label>VPS37-1</label>
    </interactant>
    <organismsDiffer>false</organismsDiffer>
    <experiments>3</experiments>
</comment>
<comment type="subcellular location">
    <subcellularLocation>
        <location evidence="1">Endosome</location>
    </subcellularLocation>
</comment>
<comment type="similarity">
    <text evidence="2 3">Belongs to the VPS28 family.</text>
</comment>
<comment type="sequence caution" evidence="5">
    <conflict type="erroneous initiation">
        <sequence resource="EMBL-CDS" id="AAD48972"/>
    </conflict>
</comment>
<comment type="sequence caution" evidence="5">
    <conflict type="erroneous initiation">
        <sequence resource="EMBL-CDS" id="CAB81042"/>
    </conflict>
</comment>
<proteinExistence type="evidence at protein level"/>
<accession>Q9S9T7</accession>
<accession>Q6DBF1</accession>
<sequence length="210" mass="23689">MMEVKLWNDKREREMYENFAELFAIIKATEKLEKAYIRDLINPSEYESECQKLIVHFKTLSATLKDTVPNIERFADTYKMDCPAALYRLVTSGLPATVEHRATVAASTSNSASIVAECVQNFITSMDSLKLNMVAVDQVYPLLSDLSASLNKLSILPPDFEGKTKMKEWLSRLSKMGAADELTEQQSRQLHFDLESSYNSFMAALPKAGN</sequence>
<evidence type="ECO:0000250" key="1"/>
<evidence type="ECO:0000255" key="2">
    <source>
        <dbReference type="PROSITE-ProRule" id="PRU00642"/>
    </source>
</evidence>
<evidence type="ECO:0000255" key="3">
    <source>
        <dbReference type="PROSITE-ProRule" id="PRU00645"/>
    </source>
</evidence>
<evidence type="ECO:0000269" key="4">
    <source>
    </source>
</evidence>
<evidence type="ECO:0000305" key="5"/>
<reference key="1">
    <citation type="journal article" date="1999" name="Nature">
        <title>Sequence and analysis of chromosome 4 of the plant Arabidopsis thaliana.</title>
        <authorList>
            <person name="Mayer K.F.X."/>
            <person name="Schueller C."/>
            <person name="Wambutt R."/>
            <person name="Murphy G."/>
            <person name="Volckaert G."/>
            <person name="Pohl T."/>
            <person name="Duesterhoeft A."/>
            <person name="Stiekema W."/>
            <person name="Entian K.-D."/>
            <person name="Terryn N."/>
            <person name="Harris B."/>
            <person name="Ansorge W."/>
            <person name="Brandt P."/>
            <person name="Grivell L.A."/>
            <person name="Rieger M."/>
            <person name="Weichselgartner M."/>
            <person name="de Simone V."/>
            <person name="Obermaier B."/>
            <person name="Mache R."/>
            <person name="Mueller M."/>
            <person name="Kreis M."/>
            <person name="Delseny M."/>
            <person name="Puigdomenech P."/>
            <person name="Watson M."/>
            <person name="Schmidtheini T."/>
            <person name="Reichert B."/>
            <person name="Portetelle D."/>
            <person name="Perez-Alonso M."/>
            <person name="Boutry M."/>
            <person name="Bancroft I."/>
            <person name="Vos P."/>
            <person name="Hoheisel J."/>
            <person name="Zimmermann W."/>
            <person name="Wedler H."/>
            <person name="Ridley P."/>
            <person name="Langham S.-A."/>
            <person name="McCullagh B."/>
            <person name="Bilham L."/>
            <person name="Robben J."/>
            <person name="van der Schueren J."/>
            <person name="Grymonprez B."/>
            <person name="Chuang Y.-J."/>
            <person name="Vandenbussche F."/>
            <person name="Braeken M."/>
            <person name="Weltjens I."/>
            <person name="Voet M."/>
            <person name="Bastiaens I."/>
            <person name="Aert R."/>
            <person name="Defoor E."/>
            <person name="Weitzenegger T."/>
            <person name="Bothe G."/>
            <person name="Ramsperger U."/>
            <person name="Hilbert H."/>
            <person name="Braun M."/>
            <person name="Holzer E."/>
            <person name="Brandt A."/>
            <person name="Peters S."/>
            <person name="van Staveren M."/>
            <person name="Dirkse W."/>
            <person name="Mooijman P."/>
            <person name="Klein Lankhorst R."/>
            <person name="Rose M."/>
            <person name="Hauf J."/>
            <person name="Koetter P."/>
            <person name="Berneiser S."/>
            <person name="Hempel S."/>
            <person name="Feldpausch M."/>
            <person name="Lamberth S."/>
            <person name="Van den Daele H."/>
            <person name="De Keyser A."/>
            <person name="Buysshaert C."/>
            <person name="Gielen J."/>
            <person name="Villarroel R."/>
            <person name="De Clercq R."/>
            <person name="van Montagu M."/>
            <person name="Rogers J."/>
            <person name="Cronin A."/>
            <person name="Quail M.A."/>
            <person name="Bray-Allen S."/>
            <person name="Clark L."/>
            <person name="Doggett J."/>
            <person name="Hall S."/>
            <person name="Kay M."/>
            <person name="Lennard N."/>
            <person name="McLay K."/>
            <person name="Mayes R."/>
            <person name="Pettett A."/>
            <person name="Rajandream M.A."/>
            <person name="Lyne M."/>
            <person name="Benes V."/>
            <person name="Rechmann S."/>
            <person name="Borkova D."/>
            <person name="Bloecker H."/>
            <person name="Scharfe M."/>
            <person name="Grimm M."/>
            <person name="Loehnert T.-H."/>
            <person name="Dose S."/>
            <person name="de Haan M."/>
            <person name="Maarse A.C."/>
            <person name="Schaefer M."/>
            <person name="Mueller-Auer S."/>
            <person name="Gabel C."/>
            <person name="Fuchs M."/>
            <person name="Fartmann B."/>
            <person name="Granderath K."/>
            <person name="Dauner D."/>
            <person name="Herzl A."/>
            <person name="Neumann S."/>
            <person name="Argiriou A."/>
            <person name="Vitale D."/>
            <person name="Liguori R."/>
            <person name="Piravandi E."/>
            <person name="Massenet O."/>
            <person name="Quigley F."/>
            <person name="Clabauld G."/>
            <person name="Muendlein A."/>
            <person name="Felber R."/>
            <person name="Schnabl S."/>
            <person name="Hiller R."/>
            <person name="Schmidt W."/>
            <person name="Lecharny A."/>
            <person name="Aubourg S."/>
            <person name="Chefdor F."/>
            <person name="Cooke R."/>
            <person name="Berger C."/>
            <person name="Monfort A."/>
            <person name="Casacuberta E."/>
            <person name="Gibbons T."/>
            <person name="Weber N."/>
            <person name="Vandenbol M."/>
            <person name="Bargues M."/>
            <person name="Terol J."/>
            <person name="Torres A."/>
            <person name="Perez-Perez A."/>
            <person name="Purnelle B."/>
            <person name="Bent E."/>
            <person name="Johnson S."/>
            <person name="Tacon D."/>
            <person name="Jesse T."/>
            <person name="Heijnen L."/>
            <person name="Schwarz S."/>
            <person name="Scholler P."/>
            <person name="Heber S."/>
            <person name="Francs P."/>
            <person name="Bielke C."/>
            <person name="Frishman D."/>
            <person name="Haase D."/>
            <person name="Lemcke K."/>
            <person name="Mewes H.-W."/>
            <person name="Stocker S."/>
            <person name="Zaccaria P."/>
            <person name="Bevan M."/>
            <person name="Wilson R.K."/>
            <person name="de la Bastide M."/>
            <person name="Habermann K."/>
            <person name="Parnell L."/>
            <person name="Dedhia N."/>
            <person name="Gnoj L."/>
            <person name="Schutz K."/>
            <person name="Huang E."/>
            <person name="Spiegel L."/>
            <person name="Sekhon M."/>
            <person name="Murray J."/>
            <person name="Sheet P."/>
            <person name="Cordes M."/>
            <person name="Abu-Threideh J."/>
            <person name="Stoneking T."/>
            <person name="Kalicki J."/>
            <person name="Graves T."/>
            <person name="Harmon G."/>
            <person name="Edwards J."/>
            <person name="Latreille P."/>
            <person name="Courtney L."/>
            <person name="Cloud J."/>
            <person name="Abbott A."/>
            <person name="Scott K."/>
            <person name="Johnson D."/>
            <person name="Minx P."/>
            <person name="Bentley D."/>
            <person name="Fulton B."/>
            <person name="Miller N."/>
            <person name="Greco T."/>
            <person name="Kemp K."/>
            <person name="Kramer J."/>
            <person name="Fulton L."/>
            <person name="Mardis E."/>
            <person name="Dante M."/>
            <person name="Pepin K."/>
            <person name="Hillier L.W."/>
            <person name="Nelson J."/>
            <person name="Spieth J."/>
            <person name="Ryan E."/>
            <person name="Andrews S."/>
            <person name="Geisel C."/>
            <person name="Layman D."/>
            <person name="Du H."/>
            <person name="Ali J."/>
            <person name="Berghoff A."/>
            <person name="Jones K."/>
            <person name="Drone K."/>
            <person name="Cotton M."/>
            <person name="Joshu C."/>
            <person name="Antonoiu B."/>
            <person name="Zidanic M."/>
            <person name="Strong C."/>
            <person name="Sun H."/>
            <person name="Lamar B."/>
            <person name="Yordan C."/>
            <person name="Ma P."/>
            <person name="Zhong J."/>
            <person name="Preston R."/>
            <person name="Vil D."/>
            <person name="Shekher M."/>
            <person name="Matero A."/>
            <person name="Shah R."/>
            <person name="Swaby I.K."/>
            <person name="O'Shaughnessy A."/>
            <person name="Rodriguez M."/>
            <person name="Hoffman J."/>
            <person name="Till S."/>
            <person name="Granat S."/>
            <person name="Shohdy N."/>
            <person name="Hasegawa A."/>
            <person name="Hameed A."/>
            <person name="Lodhi M."/>
            <person name="Johnson A."/>
            <person name="Chen E."/>
            <person name="Marra M.A."/>
            <person name="Martienssen R."/>
            <person name="McCombie W.R."/>
        </authorList>
    </citation>
    <scope>NUCLEOTIDE SEQUENCE [LARGE SCALE GENOMIC DNA]</scope>
    <source>
        <strain>cv. Columbia</strain>
    </source>
</reference>
<reference key="2">
    <citation type="journal article" date="2017" name="Plant J.">
        <title>Araport11: a complete reannotation of the Arabidopsis thaliana reference genome.</title>
        <authorList>
            <person name="Cheng C.Y."/>
            <person name="Krishnakumar V."/>
            <person name="Chan A.P."/>
            <person name="Thibaud-Nissen F."/>
            <person name="Schobel S."/>
            <person name="Town C.D."/>
        </authorList>
    </citation>
    <scope>GENOME REANNOTATION</scope>
    <source>
        <strain>cv. Columbia</strain>
    </source>
</reference>
<reference key="3">
    <citation type="submission" date="2004-09" db="EMBL/GenBank/DDBJ databases">
        <title>Arabidopsis ORF clones.</title>
        <authorList>
            <person name="Cheuk R.F."/>
            <person name="Chen H."/>
            <person name="Kim C.J."/>
            <person name="Shinn P."/>
            <person name="Ecker J.R."/>
        </authorList>
    </citation>
    <scope>NUCLEOTIDE SEQUENCE [LARGE SCALE MRNA]</scope>
    <source>
        <strain>cv. Columbia</strain>
    </source>
</reference>
<reference key="4">
    <citation type="submission" date="2006-07" db="EMBL/GenBank/DDBJ databases">
        <title>Large-scale analysis of RIKEN Arabidopsis full-length (RAFL) cDNAs.</title>
        <authorList>
            <person name="Totoki Y."/>
            <person name="Seki M."/>
            <person name="Ishida J."/>
            <person name="Nakajima M."/>
            <person name="Enju A."/>
            <person name="Kamiya A."/>
            <person name="Narusaka M."/>
            <person name="Shin-i T."/>
            <person name="Nakagawa M."/>
            <person name="Sakamoto N."/>
            <person name="Oishi K."/>
            <person name="Kohara Y."/>
            <person name="Kobayashi M."/>
            <person name="Toyoda A."/>
            <person name="Sakaki Y."/>
            <person name="Sakurai T."/>
            <person name="Iida K."/>
            <person name="Akiyama K."/>
            <person name="Satou M."/>
            <person name="Toyoda T."/>
            <person name="Konagaya A."/>
            <person name="Carninci P."/>
            <person name="Kawai J."/>
            <person name="Hayashizaki Y."/>
            <person name="Shinozaki K."/>
        </authorList>
    </citation>
    <scope>NUCLEOTIDE SEQUENCE [LARGE SCALE MRNA]</scope>
    <source>
        <strain>cv. Columbia</strain>
    </source>
</reference>
<reference key="5">
    <citation type="journal article" date="2006" name="Development">
        <title>The Arabidopsis elch mutant reveals functions of an ESCRT component in cytokinesis.</title>
        <authorList>
            <person name="Spitzer C."/>
            <person name="Schellmann S."/>
            <person name="Sabovljevic A."/>
            <person name="Shahriari M."/>
            <person name="Keshavaiah C."/>
            <person name="Bechtold N."/>
            <person name="Herzog M."/>
            <person name="Mueller S."/>
            <person name="Hanisch F.-G."/>
            <person name="Huelskamp M."/>
        </authorList>
    </citation>
    <scope>IDENTIFICATION</scope>
    <scope>NOMENCLATURE</scope>
    <scope>INTERACTION WITH ELC</scope>
</reference>
<reference key="6">
    <citation type="journal article" date="2006" name="Trends Plant Sci.">
        <title>Exploring the ESCRTing machinery in eukaryotes.</title>
        <authorList>
            <person name="Winter V."/>
            <person name="Hauser M.-T."/>
        </authorList>
    </citation>
    <scope>IDENTIFICATION</scope>
</reference>
<name>VP282_ARATH</name>
<feature type="chain" id="PRO_0000120955" description="Vacuolar protein sorting-associated protein 28 homolog 2">
    <location>
        <begin position="1"/>
        <end position="210"/>
    </location>
</feature>
<feature type="domain" description="VPS28 N-terminal" evidence="3">
    <location>
        <begin position="1"/>
        <end position="99"/>
    </location>
</feature>
<feature type="domain" description="VPS28 C-terminal" evidence="2">
    <location>
        <begin position="109"/>
        <end position="205"/>
    </location>
</feature>